<dbReference type="EMBL" id="AB008551">
    <property type="protein sequence ID" value="BAA32699.1"/>
    <property type="molecule type" value="mRNA"/>
</dbReference>
<dbReference type="EMBL" id="AB001347">
    <property type="protein sequence ID" value="BAA32473.1"/>
    <property type="molecule type" value="mRNA"/>
</dbReference>
<dbReference type="EMBL" id="AF225960">
    <property type="protein sequence ID" value="AAG28596.1"/>
    <property type="molecule type" value="mRNA"/>
</dbReference>
<dbReference type="PIR" id="JE0271">
    <property type="entry name" value="JE0271"/>
</dbReference>
<dbReference type="BMRB" id="Q9QWN8"/>
<dbReference type="SMR" id="Q9QWN8"/>
<dbReference type="BioGRID" id="247889">
    <property type="interactions" value="6"/>
</dbReference>
<dbReference type="CORUM" id="Q9QWN8"/>
<dbReference type="FunCoup" id="Q9QWN8">
    <property type="interactions" value="139"/>
</dbReference>
<dbReference type="IntAct" id="Q9QWN8">
    <property type="interactions" value="2"/>
</dbReference>
<dbReference type="MINT" id="Q9QWN8"/>
<dbReference type="STRING" id="10116.ENSRNOP00000070189"/>
<dbReference type="GlyGen" id="Q9QWN8">
    <property type="glycosylation" value="1 site, 1 O-linked glycan (1 site)"/>
</dbReference>
<dbReference type="iPTMnet" id="Q9QWN8"/>
<dbReference type="PhosphoSitePlus" id="Q9QWN8"/>
<dbReference type="jPOST" id="Q9QWN8"/>
<dbReference type="PaxDb" id="10116-ENSRNOP00000026573"/>
<dbReference type="UCSC" id="RGD:3751">
    <property type="organism name" value="rat"/>
</dbReference>
<dbReference type="AGR" id="RGD:3751"/>
<dbReference type="RGD" id="3751">
    <property type="gene designation" value="Sptbn2"/>
</dbReference>
<dbReference type="eggNOG" id="KOG0517">
    <property type="taxonomic scope" value="Eukaryota"/>
</dbReference>
<dbReference type="InParanoid" id="Q9QWN8"/>
<dbReference type="PhylomeDB" id="Q9QWN8"/>
<dbReference type="Reactome" id="R-RNO-2132295">
    <property type="pathway name" value="MHC class II antigen presentation"/>
</dbReference>
<dbReference type="Reactome" id="R-RNO-375165">
    <property type="pathway name" value="NCAM signaling for neurite out-growth"/>
</dbReference>
<dbReference type="Reactome" id="R-RNO-445095">
    <property type="pathway name" value="Interaction between L1 and Ankyrins"/>
</dbReference>
<dbReference type="Reactome" id="R-RNO-5673001">
    <property type="pathway name" value="RAF/MAP kinase cascade"/>
</dbReference>
<dbReference type="Reactome" id="R-RNO-6807878">
    <property type="pathway name" value="COPI-mediated anterograde transport"/>
</dbReference>
<dbReference type="PRO" id="PR:Q9QWN8"/>
<dbReference type="Proteomes" id="UP000002494">
    <property type="component" value="Unplaced"/>
</dbReference>
<dbReference type="GO" id="GO:0016324">
    <property type="term" value="C:apical plasma membrane"/>
    <property type="evidence" value="ECO:0000266"/>
    <property type="project" value="RGD"/>
</dbReference>
<dbReference type="GO" id="GO:0030054">
    <property type="term" value="C:cell junction"/>
    <property type="evidence" value="ECO:0000318"/>
    <property type="project" value="GO_Central"/>
</dbReference>
<dbReference type="GO" id="GO:0042995">
    <property type="term" value="C:cell projection"/>
    <property type="evidence" value="ECO:0000318"/>
    <property type="project" value="GO_Central"/>
</dbReference>
<dbReference type="GO" id="GO:0030864">
    <property type="term" value="C:cortical actin cytoskeleton"/>
    <property type="evidence" value="ECO:0000318"/>
    <property type="project" value="GO_Central"/>
</dbReference>
<dbReference type="GO" id="GO:0005737">
    <property type="term" value="C:cytoplasm"/>
    <property type="evidence" value="ECO:0000304"/>
    <property type="project" value="UniProtKB"/>
</dbReference>
<dbReference type="GO" id="GO:0005829">
    <property type="term" value="C:cytosol"/>
    <property type="evidence" value="ECO:0000304"/>
    <property type="project" value="Reactome"/>
</dbReference>
<dbReference type="GO" id="GO:0005768">
    <property type="term" value="C:endosome"/>
    <property type="evidence" value="ECO:0000314"/>
    <property type="project" value="RGD"/>
</dbReference>
<dbReference type="GO" id="GO:0098978">
    <property type="term" value="C:glutamatergic synapse"/>
    <property type="evidence" value="ECO:0000266"/>
    <property type="project" value="RGD"/>
</dbReference>
<dbReference type="GO" id="GO:0000139">
    <property type="term" value="C:Golgi membrane"/>
    <property type="evidence" value="ECO:0000314"/>
    <property type="project" value="RGD"/>
</dbReference>
<dbReference type="GO" id="GO:0043025">
    <property type="term" value="C:neuronal cell body"/>
    <property type="evidence" value="ECO:0000266"/>
    <property type="project" value="RGD"/>
</dbReference>
<dbReference type="GO" id="GO:0016363">
    <property type="term" value="C:nuclear matrix"/>
    <property type="evidence" value="ECO:0000304"/>
    <property type="project" value="UniProtKB"/>
</dbReference>
<dbReference type="GO" id="GO:0098688">
    <property type="term" value="C:parallel fiber to Purkinje cell synapse"/>
    <property type="evidence" value="ECO:0000266"/>
    <property type="project" value="RGD"/>
</dbReference>
<dbReference type="GO" id="GO:0033010">
    <property type="term" value="C:paranodal junction"/>
    <property type="evidence" value="ECO:0000266"/>
    <property type="project" value="RGD"/>
</dbReference>
<dbReference type="GO" id="GO:0048471">
    <property type="term" value="C:perinuclear region of cytoplasm"/>
    <property type="evidence" value="ECO:0000314"/>
    <property type="project" value="RGD"/>
</dbReference>
<dbReference type="GO" id="GO:0005886">
    <property type="term" value="C:plasma membrane"/>
    <property type="evidence" value="ECO:0000318"/>
    <property type="project" value="GO_Central"/>
</dbReference>
<dbReference type="GO" id="GO:0099189">
    <property type="term" value="C:postsynaptic spectrin-associated cytoskeleton"/>
    <property type="evidence" value="ECO:0000266"/>
    <property type="project" value="RGD"/>
</dbReference>
<dbReference type="GO" id="GO:0098793">
    <property type="term" value="C:presynapse"/>
    <property type="evidence" value="ECO:0000266"/>
    <property type="project" value="RGD"/>
</dbReference>
<dbReference type="GO" id="GO:0008091">
    <property type="term" value="C:spectrin"/>
    <property type="evidence" value="ECO:0000266"/>
    <property type="project" value="RGD"/>
</dbReference>
<dbReference type="GO" id="GO:0008021">
    <property type="term" value="C:synaptic vesicle"/>
    <property type="evidence" value="ECO:0000314"/>
    <property type="project" value="RGD"/>
</dbReference>
<dbReference type="GO" id="GO:0051015">
    <property type="term" value="F:actin filament binding"/>
    <property type="evidence" value="ECO:0000318"/>
    <property type="project" value="GO_Central"/>
</dbReference>
<dbReference type="GO" id="GO:0005543">
    <property type="term" value="F:phospholipid binding"/>
    <property type="evidence" value="ECO:0007669"/>
    <property type="project" value="InterPro"/>
</dbReference>
<dbReference type="GO" id="GO:0005200">
    <property type="term" value="F:structural constituent of cytoskeleton"/>
    <property type="evidence" value="ECO:0000304"/>
    <property type="project" value="UniProtKB"/>
</dbReference>
<dbReference type="GO" id="GO:0099186">
    <property type="term" value="F:structural constituent of postsynapse"/>
    <property type="evidence" value="ECO:0000266"/>
    <property type="project" value="RGD"/>
</dbReference>
<dbReference type="GO" id="GO:0098918">
    <property type="term" value="F:structural constituent of synapse"/>
    <property type="evidence" value="ECO:0000318"/>
    <property type="project" value="GO_Central"/>
</dbReference>
<dbReference type="GO" id="GO:0030036">
    <property type="term" value="P:actin cytoskeleton organization"/>
    <property type="evidence" value="ECO:0000318"/>
    <property type="project" value="GO_Central"/>
</dbReference>
<dbReference type="GO" id="GO:0051693">
    <property type="term" value="P:actin filament capping"/>
    <property type="evidence" value="ECO:0007669"/>
    <property type="project" value="UniProtKB-KW"/>
</dbReference>
<dbReference type="GO" id="GO:0030534">
    <property type="term" value="P:adult behavior"/>
    <property type="evidence" value="ECO:0000266"/>
    <property type="project" value="RGD"/>
</dbReference>
<dbReference type="GO" id="GO:0071361">
    <property type="term" value="P:cellular response to ethanol"/>
    <property type="evidence" value="ECO:0000270"/>
    <property type="project" value="RGD"/>
</dbReference>
<dbReference type="GO" id="GO:0021692">
    <property type="term" value="P:cerebellar Purkinje cell layer morphogenesis"/>
    <property type="evidence" value="ECO:0000266"/>
    <property type="project" value="RGD"/>
</dbReference>
<dbReference type="GO" id="GO:0035264">
    <property type="term" value="P:multicellular organism growth"/>
    <property type="evidence" value="ECO:0000266"/>
    <property type="project" value="RGD"/>
</dbReference>
<dbReference type="GO" id="GO:0099173">
    <property type="term" value="P:postsynapse organization"/>
    <property type="evidence" value="ECO:0000266"/>
    <property type="project" value="RGD"/>
</dbReference>
<dbReference type="GO" id="GO:0017158">
    <property type="term" value="P:regulation of calcium ion-dependent exocytosis"/>
    <property type="evidence" value="ECO:0000304"/>
    <property type="project" value="UniProtKB"/>
</dbReference>
<dbReference type="GO" id="GO:0099150">
    <property type="term" value="P:regulation of postsynaptic specialization assembly"/>
    <property type="evidence" value="ECO:0000266"/>
    <property type="project" value="RGD"/>
</dbReference>
<dbReference type="GO" id="GO:0007416">
    <property type="term" value="P:synapse assembly"/>
    <property type="evidence" value="ECO:0000266"/>
    <property type="project" value="RGD"/>
</dbReference>
<dbReference type="GO" id="GO:0016081">
    <property type="term" value="P:synaptic vesicle docking"/>
    <property type="evidence" value="ECO:0000304"/>
    <property type="project" value="UniProtKB"/>
</dbReference>
<dbReference type="GO" id="GO:0016079">
    <property type="term" value="P:synaptic vesicle exocytosis"/>
    <property type="evidence" value="ECO:0000353"/>
    <property type="project" value="UniProtKB"/>
</dbReference>
<dbReference type="GO" id="GO:0016192">
    <property type="term" value="P:vesicle-mediated transport"/>
    <property type="evidence" value="ECO:0000266"/>
    <property type="project" value="RGD"/>
</dbReference>
<dbReference type="CDD" id="cd21246">
    <property type="entry name" value="CH_SPTB-like_rpt1"/>
    <property type="match status" value="1"/>
</dbReference>
<dbReference type="CDD" id="cd21321">
    <property type="entry name" value="CH_SPTBN2_rpt2"/>
    <property type="match status" value="1"/>
</dbReference>
<dbReference type="CDD" id="cd10571">
    <property type="entry name" value="PH_beta_spectrin"/>
    <property type="match status" value="1"/>
</dbReference>
<dbReference type="CDD" id="cd00176">
    <property type="entry name" value="SPEC"/>
    <property type="match status" value="8"/>
</dbReference>
<dbReference type="FunFam" id="1.10.418.10:FF:000003">
    <property type="entry name" value="Spectrin beta chain"/>
    <property type="match status" value="1"/>
</dbReference>
<dbReference type="FunFam" id="1.10.418.10:FF:000004">
    <property type="entry name" value="Spectrin beta chain"/>
    <property type="match status" value="1"/>
</dbReference>
<dbReference type="FunFam" id="1.20.58.60:FF:000011">
    <property type="entry name" value="Spectrin beta chain"/>
    <property type="match status" value="1"/>
</dbReference>
<dbReference type="FunFam" id="1.20.58.60:FF:000018">
    <property type="entry name" value="Spectrin beta chain"/>
    <property type="match status" value="1"/>
</dbReference>
<dbReference type="FunFam" id="1.20.58.60:FF:000019">
    <property type="entry name" value="Spectrin beta chain"/>
    <property type="match status" value="1"/>
</dbReference>
<dbReference type="FunFam" id="1.20.58.60:FF:000028">
    <property type="entry name" value="Spectrin beta chain"/>
    <property type="match status" value="1"/>
</dbReference>
<dbReference type="FunFam" id="1.20.58.60:FF:000033">
    <property type="entry name" value="Spectrin beta chain"/>
    <property type="match status" value="1"/>
</dbReference>
<dbReference type="FunFam" id="1.20.58.60:FF:000049">
    <property type="entry name" value="Spectrin beta chain"/>
    <property type="match status" value="1"/>
</dbReference>
<dbReference type="FunFam" id="1.20.58.60:FF:000059">
    <property type="entry name" value="Spectrin beta chain"/>
    <property type="match status" value="1"/>
</dbReference>
<dbReference type="FunFam" id="1.20.58.60:FF:000083">
    <property type="entry name" value="Spectrin beta chain"/>
    <property type="match status" value="1"/>
</dbReference>
<dbReference type="FunFam" id="1.20.58.60:FF:000106">
    <property type="entry name" value="Spectrin beta chain"/>
    <property type="match status" value="1"/>
</dbReference>
<dbReference type="FunFam" id="1.20.58.60:FF:000130">
    <property type="entry name" value="Spectrin beta chain"/>
    <property type="match status" value="1"/>
</dbReference>
<dbReference type="FunFam" id="1.20.58.60:FF:000179">
    <property type="entry name" value="Spectrin beta chain"/>
    <property type="match status" value="1"/>
</dbReference>
<dbReference type="FunFam" id="1.20.58.60:FF:000373">
    <property type="entry name" value="Spectrin beta chain"/>
    <property type="match status" value="1"/>
</dbReference>
<dbReference type="FunFam" id="2.30.29.30:FF:000024">
    <property type="entry name" value="Spectrin beta chain"/>
    <property type="match status" value="1"/>
</dbReference>
<dbReference type="Gene3D" id="1.20.58.60">
    <property type="match status" value="13"/>
</dbReference>
<dbReference type="Gene3D" id="1.10.418.10">
    <property type="entry name" value="Calponin-like domain"/>
    <property type="match status" value="2"/>
</dbReference>
<dbReference type="Gene3D" id="2.30.29.30">
    <property type="entry name" value="Pleckstrin-homology domain (PH domain)/Phosphotyrosine-binding domain (PTB)"/>
    <property type="match status" value="1"/>
</dbReference>
<dbReference type="InterPro" id="IPR001589">
    <property type="entry name" value="Actinin_actin-bd_CS"/>
</dbReference>
<dbReference type="InterPro" id="IPR001715">
    <property type="entry name" value="CH_dom"/>
</dbReference>
<dbReference type="InterPro" id="IPR036872">
    <property type="entry name" value="CH_dom_sf"/>
</dbReference>
<dbReference type="InterPro" id="IPR011993">
    <property type="entry name" value="PH-like_dom_sf"/>
</dbReference>
<dbReference type="InterPro" id="IPR041681">
    <property type="entry name" value="PH_9"/>
</dbReference>
<dbReference type="InterPro" id="IPR001605">
    <property type="entry name" value="PH_dom-spectrin-type"/>
</dbReference>
<dbReference type="InterPro" id="IPR001849">
    <property type="entry name" value="PH_domain"/>
</dbReference>
<dbReference type="InterPro" id="IPR018159">
    <property type="entry name" value="Spectrin/alpha-actinin"/>
</dbReference>
<dbReference type="InterPro" id="IPR016343">
    <property type="entry name" value="Spectrin_bsu"/>
</dbReference>
<dbReference type="InterPro" id="IPR002017">
    <property type="entry name" value="Spectrin_repeat"/>
</dbReference>
<dbReference type="PANTHER" id="PTHR11915">
    <property type="entry name" value="SPECTRIN/FILAMIN RELATED CYTOSKELETAL PROTEIN"/>
    <property type="match status" value="1"/>
</dbReference>
<dbReference type="Pfam" id="PF00307">
    <property type="entry name" value="CH"/>
    <property type="match status" value="2"/>
</dbReference>
<dbReference type="Pfam" id="PF15410">
    <property type="entry name" value="PH_9"/>
    <property type="match status" value="1"/>
</dbReference>
<dbReference type="Pfam" id="PF00435">
    <property type="entry name" value="Spectrin"/>
    <property type="match status" value="17"/>
</dbReference>
<dbReference type="PIRSF" id="PIRSF002297">
    <property type="entry name" value="Spectrin_beta_subunit"/>
    <property type="match status" value="1"/>
</dbReference>
<dbReference type="PRINTS" id="PR00683">
    <property type="entry name" value="SPECTRINPH"/>
</dbReference>
<dbReference type="SMART" id="SM00033">
    <property type="entry name" value="CH"/>
    <property type="match status" value="2"/>
</dbReference>
<dbReference type="SMART" id="SM00233">
    <property type="entry name" value="PH"/>
    <property type="match status" value="1"/>
</dbReference>
<dbReference type="SMART" id="SM00150">
    <property type="entry name" value="SPEC"/>
    <property type="match status" value="17"/>
</dbReference>
<dbReference type="SUPFAM" id="SSF47576">
    <property type="entry name" value="Calponin-homology domain, CH-domain"/>
    <property type="match status" value="1"/>
</dbReference>
<dbReference type="SUPFAM" id="SSF50729">
    <property type="entry name" value="PH domain-like"/>
    <property type="match status" value="1"/>
</dbReference>
<dbReference type="SUPFAM" id="SSF46966">
    <property type="entry name" value="Spectrin repeat"/>
    <property type="match status" value="13"/>
</dbReference>
<dbReference type="PROSITE" id="PS00019">
    <property type="entry name" value="ACTININ_1"/>
    <property type="match status" value="1"/>
</dbReference>
<dbReference type="PROSITE" id="PS00020">
    <property type="entry name" value="ACTININ_2"/>
    <property type="match status" value="1"/>
</dbReference>
<dbReference type="PROSITE" id="PS50021">
    <property type="entry name" value="CH"/>
    <property type="match status" value="2"/>
</dbReference>
<dbReference type="PROSITE" id="PS50003">
    <property type="entry name" value="PH_DOMAIN"/>
    <property type="match status" value="1"/>
</dbReference>
<reference key="1">
    <citation type="journal article" date="1998" name="Brain Res. Mol. Brain Res.">
        <title>Characterization of a new beta-spectrin gene which is predominantly expressed in brain.</title>
        <authorList>
            <person name="Ohara O."/>
            <person name="Ohara R."/>
            <person name="Yamakawa H."/>
            <person name="Nakajima D."/>
            <person name="Nakayama M."/>
        </authorList>
    </citation>
    <scope>NUCLEOTIDE SEQUENCE [MRNA]</scope>
    <source>
        <strain>Sprague-Dawley</strain>
        <tissue>Brain</tissue>
    </source>
</reference>
<reference key="2">
    <citation type="journal article" date="1998" name="Biochem. Biophys. Res. Commun.">
        <title>A novel brain-specific isoform of beta spectrin: isolation and its interaction with Munc13.</title>
        <authorList>
            <person name="Sakaguchi G."/>
            <person name="Orita S."/>
            <person name="Naito A."/>
            <person name="Maeda M."/>
            <person name="Igarashi H."/>
            <person name="Sasaki T."/>
            <person name="Takai Y."/>
        </authorList>
    </citation>
    <scope>NUCLEOTIDE SEQUENCE [MRNA]</scope>
    <source>
        <strain>Sprague-Dawley</strain>
        <tissue>Brain</tissue>
    </source>
</reference>
<reference key="3">
    <citation type="journal article" date="2001" name="Nature">
        <title>Modulation of the neuronal glutamate transporter EAAT4 by two interacting proteins.</title>
        <authorList>
            <person name="Jackson M."/>
            <person name="Song W."/>
            <person name="Liu M.-Y."/>
            <person name="Jin L."/>
            <person name="Dykes-Hoberg M."/>
            <person name="Lin C.-L.G."/>
            <person name="Bowers W.J."/>
            <person name="Federoff H.J."/>
            <person name="Sternweis P.C."/>
            <person name="Rothstein J.D."/>
        </authorList>
    </citation>
    <scope>NUCLEOTIDE SEQUENCE [MRNA]</scope>
</reference>
<reference key="4">
    <citation type="journal article" date="2006" name="Proc. Natl. Acad. Sci. U.S.A.">
        <title>Quantitative phosphoproteomics of vasopressin-sensitive renal cells: regulation of aquaporin-2 phosphorylation at two sites.</title>
        <authorList>
            <person name="Hoffert J.D."/>
            <person name="Pisitkun T."/>
            <person name="Wang G."/>
            <person name="Shen R.-F."/>
            <person name="Knepper M.A."/>
        </authorList>
    </citation>
    <scope>PHOSPHORYLATION [LARGE SCALE ANALYSIS] AT SER-1574</scope>
    <scope>IDENTIFICATION BY MASS SPECTROMETRY [LARGE SCALE ANALYSIS]</scope>
</reference>
<reference key="5">
    <citation type="journal article" date="2012" name="Nat. Commun.">
        <title>Quantitative maps of protein phosphorylation sites across 14 different rat organs and tissues.</title>
        <authorList>
            <person name="Lundby A."/>
            <person name="Secher A."/>
            <person name="Lage K."/>
            <person name="Nordsborg N.B."/>
            <person name="Dmytriyev A."/>
            <person name="Lundby C."/>
            <person name="Olsen J.V."/>
        </authorList>
    </citation>
    <scope>PHOSPHORYLATION [LARGE SCALE ANALYSIS] AT SER-6; SER-31; SER-1073; SER-2169 AND SER-2199</scope>
    <scope>IDENTIFICATION BY MASS SPECTROMETRY [LARGE SCALE ANALYSIS]</scope>
</reference>
<keyword id="KW-0007">Acetylation</keyword>
<keyword id="KW-0117">Actin capping</keyword>
<keyword id="KW-0009">Actin-binding</keyword>
<keyword id="KW-0963">Cytoplasm</keyword>
<keyword id="KW-0206">Cytoskeleton</keyword>
<keyword id="KW-0597">Phosphoprotein</keyword>
<keyword id="KW-1185">Reference proteome</keyword>
<keyword id="KW-0677">Repeat</keyword>
<evidence type="ECO:0000250" key="1">
    <source>
        <dbReference type="UniProtKB" id="O15020"/>
    </source>
</evidence>
<evidence type="ECO:0000255" key="2"/>
<evidence type="ECO:0000255" key="3">
    <source>
        <dbReference type="PROSITE-ProRule" id="PRU00044"/>
    </source>
</evidence>
<evidence type="ECO:0000255" key="4">
    <source>
        <dbReference type="PROSITE-ProRule" id="PRU00145"/>
    </source>
</evidence>
<evidence type="ECO:0000256" key="5">
    <source>
        <dbReference type="SAM" id="MobiDB-lite"/>
    </source>
</evidence>
<evidence type="ECO:0000305" key="6"/>
<evidence type="ECO:0007744" key="7">
    <source>
    </source>
</evidence>
<evidence type="ECO:0007744" key="8">
    <source>
    </source>
</evidence>
<accession>Q9QWN8</accession>
<accession>O88197</accession>
<accession>Q9ES68</accession>
<gene>
    <name type="primary">Sptbn2</name>
    <name type="synonym">Spnb3</name>
</gene>
<name>SPTN2_RAT</name>
<comment type="function">
    <text>Probably plays an important role in neuronal membrane skeleton.</text>
</comment>
<comment type="subcellular location">
    <subcellularLocation>
        <location>Cytoplasm</location>
        <location>Cytoskeleton</location>
    </subcellularLocation>
    <subcellularLocation>
        <location>Cytoplasm</location>
        <location>Cell cortex</location>
    </subcellularLocation>
</comment>
<comment type="tissue specificity">
    <text>Abundantly transcribed in the brain. Neurons are the predominant cell-type to express the gene. Found abundantly in Purkinje cells.</text>
</comment>
<comment type="similarity">
    <text evidence="6">Belongs to the spectrin family.</text>
</comment>
<feature type="initiator methionine" description="Removed" evidence="1">
    <location>
        <position position="1"/>
    </location>
</feature>
<feature type="chain" id="PRO_0000073464" description="Spectrin beta chain, non-erythrocytic 2">
    <location>
        <begin position="2"/>
        <end position="2388"/>
    </location>
</feature>
<feature type="domain" description="Calponin-homology (CH) 1" evidence="3">
    <location>
        <begin position="57"/>
        <end position="161"/>
    </location>
</feature>
<feature type="domain" description="Calponin-homology (CH) 2" evidence="3">
    <location>
        <begin position="176"/>
        <end position="281"/>
    </location>
</feature>
<feature type="repeat" description="Spectrin 1" evidence="2">
    <location>
        <begin position="306"/>
        <end position="414"/>
    </location>
</feature>
<feature type="repeat" description="Spectrin 2" evidence="2">
    <location>
        <begin position="427"/>
        <end position="527"/>
    </location>
</feature>
<feature type="repeat" description="Spectrin 3" evidence="2">
    <location>
        <begin position="532"/>
        <end position="639"/>
    </location>
</feature>
<feature type="repeat" description="Spectrin 4" evidence="2">
    <location>
        <begin position="642"/>
        <end position="744"/>
    </location>
</feature>
<feature type="repeat" description="Spectrin 5" evidence="2">
    <location>
        <begin position="749"/>
        <end position="849"/>
    </location>
</feature>
<feature type="repeat" description="Spectrin 6" evidence="2">
    <location>
        <begin position="856"/>
        <end position="954"/>
    </location>
</feature>
<feature type="repeat" description="Spectrin 7" evidence="2">
    <location>
        <begin position="960"/>
        <end position="1063"/>
    </location>
</feature>
<feature type="repeat" description="Spectrin 8" evidence="2">
    <location>
        <begin position="1066"/>
        <end position="1169"/>
    </location>
</feature>
<feature type="repeat" description="Spectrin 9" evidence="2">
    <location>
        <begin position="1174"/>
        <end position="1266"/>
    </location>
</feature>
<feature type="repeat" description="Spectrin 10" evidence="2">
    <location>
        <begin position="1279"/>
        <end position="1379"/>
    </location>
</feature>
<feature type="repeat" description="Spectrin 11" evidence="2">
    <location>
        <begin position="1384"/>
        <end position="1485"/>
    </location>
</feature>
<feature type="repeat" description="Spectrin 12" evidence="2">
    <location>
        <begin position="1489"/>
        <end position="1586"/>
    </location>
</feature>
<feature type="repeat" description="Spectrin 13" evidence="2">
    <location>
        <begin position="1589"/>
        <end position="1692"/>
    </location>
</feature>
<feature type="repeat" description="Spectrin 14" evidence="2">
    <location>
        <begin position="1696"/>
        <end position="1797"/>
    </location>
</feature>
<feature type="repeat" description="Spectrin 15" evidence="2">
    <location>
        <begin position="1801"/>
        <end position="1904"/>
    </location>
</feature>
<feature type="repeat" description="Spectrin 16" evidence="2">
    <location>
        <begin position="1910"/>
        <end position="2010"/>
    </location>
</feature>
<feature type="repeat" description="Spectrin 17" evidence="2">
    <location>
        <begin position="2017"/>
        <end position="2078"/>
    </location>
</feature>
<feature type="domain" description="PH" evidence="4">
    <location>
        <begin position="2218"/>
        <end position="2328"/>
    </location>
</feature>
<feature type="region of interest" description="Actin-binding">
    <location>
        <begin position="2"/>
        <end position="278"/>
    </location>
</feature>
<feature type="region of interest" description="Disordered" evidence="5">
    <location>
        <begin position="2080"/>
        <end position="2112"/>
    </location>
</feature>
<feature type="region of interest" description="Disordered" evidence="5">
    <location>
        <begin position="2124"/>
        <end position="2207"/>
    </location>
</feature>
<feature type="region of interest" description="Disordered" evidence="5">
    <location>
        <begin position="2333"/>
        <end position="2388"/>
    </location>
</feature>
<feature type="compositionally biased region" description="Basic and acidic residues" evidence="5">
    <location>
        <begin position="2080"/>
        <end position="2096"/>
    </location>
</feature>
<feature type="compositionally biased region" description="Polar residues" evidence="5">
    <location>
        <begin position="2124"/>
        <end position="2163"/>
    </location>
</feature>
<feature type="compositionally biased region" description="Basic and acidic residues" evidence="5">
    <location>
        <begin position="2368"/>
        <end position="2381"/>
    </location>
</feature>
<feature type="modified residue" description="N-acetylserine" evidence="1">
    <location>
        <position position="2"/>
    </location>
</feature>
<feature type="modified residue" description="Phosphoserine" evidence="8">
    <location>
        <position position="6"/>
    </location>
</feature>
<feature type="modified residue" description="Phosphoserine" evidence="8">
    <location>
        <position position="31"/>
    </location>
</feature>
<feature type="modified residue" description="Phosphoserine" evidence="1">
    <location>
        <position position="959"/>
    </location>
</feature>
<feature type="modified residue" description="Phosphoserine" evidence="8">
    <location>
        <position position="1073"/>
    </location>
</feature>
<feature type="modified residue" description="Phosphoserine" evidence="7">
    <location>
        <position position="1574"/>
    </location>
</feature>
<feature type="modified residue" description="Phosphoserine" evidence="8">
    <location>
        <position position="2169"/>
    </location>
</feature>
<feature type="modified residue" description="Phosphoserine" evidence="8">
    <location>
        <position position="2199"/>
    </location>
</feature>
<feature type="modified residue" description="Phosphothreonine" evidence="1">
    <location>
        <position position="2354"/>
    </location>
</feature>
<feature type="modified residue" description="Phosphoserine" evidence="1">
    <location>
        <position position="2359"/>
    </location>
</feature>
<feature type="sequence conflict" description="In Ref. 3; AAG28596." evidence="6" ref="3">
    <original>VTL</original>
    <variation>GTF</variation>
    <location>
        <begin position="326"/>
        <end position="328"/>
    </location>
</feature>
<feature type="sequence conflict" description="In Ref. 2; BAA32473." evidence="6" ref="2">
    <original>L</original>
    <variation>F</variation>
    <location>
        <position position="543"/>
    </location>
</feature>
<feature type="sequence conflict" description="In Ref. 3; AAG28596." evidence="6" ref="3">
    <original>D</original>
    <variation>G</variation>
    <location>
        <position position="608"/>
    </location>
</feature>
<feature type="sequence conflict" description="In Ref. 3; AAG28596." evidence="6" ref="3">
    <original>L</original>
    <variation>P</variation>
    <location>
        <position position="887"/>
    </location>
</feature>
<feature type="sequence conflict" description="In Ref. 3; AAG28596." evidence="6" ref="3">
    <original>V</original>
    <variation>I</variation>
    <location>
        <position position="908"/>
    </location>
</feature>
<feature type="sequence conflict" description="In Ref. 3; AAG28596." evidence="6" ref="3">
    <original>D</original>
    <variation>G</variation>
    <location>
        <position position="948"/>
    </location>
</feature>
<feature type="sequence conflict" description="In Ref. 2; BAA32473." evidence="6" ref="2">
    <original>EL</original>
    <variation>GA</variation>
    <location>
        <begin position="1156"/>
        <end position="1157"/>
    </location>
</feature>
<feature type="sequence conflict" description="In Ref. 2; BAA32473 and 3; AAG28596." evidence="6" ref="2 3">
    <original>F</original>
    <variation>V</variation>
    <location>
        <position position="1194"/>
    </location>
</feature>
<feature type="sequence conflict" description="In Ref. 3; AAG28596." evidence="6" ref="3">
    <original>G</original>
    <variation>R</variation>
    <location>
        <position position="1555"/>
    </location>
</feature>
<feature type="sequence conflict" description="In Ref. 3; AAG28596." evidence="6" ref="3">
    <original>R</original>
    <variation>W</variation>
    <location>
        <position position="1769"/>
    </location>
</feature>
<protein>
    <recommendedName>
        <fullName>Spectrin beta chain, non-erythrocytic 2</fullName>
    </recommendedName>
    <alternativeName>
        <fullName>Beta SpIII sigma 1</fullName>
    </alternativeName>
    <alternativeName>
        <fullName>Beta-III spectrin</fullName>
    </alternativeName>
    <alternativeName>
        <fullName>Glutamate transporter EAAT4-associated protein 41</fullName>
    </alternativeName>
    <alternativeName>
        <fullName>SPNB-3</fullName>
    </alternativeName>
    <alternativeName>
        <fullName>Spectrin-like protein GTRAP41</fullName>
    </alternativeName>
</protein>
<proteinExistence type="evidence at protein level"/>
<organism>
    <name type="scientific">Rattus norvegicus</name>
    <name type="common">Rat</name>
    <dbReference type="NCBI Taxonomy" id="10116"/>
    <lineage>
        <taxon>Eukaryota</taxon>
        <taxon>Metazoa</taxon>
        <taxon>Chordata</taxon>
        <taxon>Craniata</taxon>
        <taxon>Vertebrata</taxon>
        <taxon>Euteleostomi</taxon>
        <taxon>Mammalia</taxon>
        <taxon>Eutheria</taxon>
        <taxon>Euarchontoglires</taxon>
        <taxon>Glires</taxon>
        <taxon>Rodentia</taxon>
        <taxon>Myomorpha</taxon>
        <taxon>Muroidea</taxon>
        <taxon>Muridae</taxon>
        <taxon>Murinae</taxon>
        <taxon>Rattus</taxon>
    </lineage>
</organism>
<sequence length="2388" mass="271064">MSSTLSPTDFDSLEIQGQYSDINNRWDLPDSDWDNDSSSARLFERSRIKALADEREAVQKKTFTKWVNSHLARVTCRVGDLYSDLRDGRNLLRLLEVLSGETLPKPTKGRMRIHCLENVDKALQFLKEQKVHLENMGSHDIVDGNHRLTLGLVWTIILRFQIQDISVETEDNKEKKSAKDALLLWCQMKTAGYPNVNVHNFTTSWRDGLAFNAIVHKHRPDLLDFESLKKCNAHYNLQNAFNLAEKELGLTKLLDPEDVNVDQPDEKSIITYVATYYHYFSKMKALAVEGKRIGKVLDHAMEAEHLVEKYESLASELLQWIEQTIVTLNDRQLANSLSGVQNQLQSFNSYRTVEKPPKFTEKGNLEVLLFTIQSKLRANNQKVYTPREGRLISDINKAWERLEKAEHERELALRTELIRQEKLEQLAARFDRKAAMRETWLSENQRLVSQDNFGLELAAVEAAVRKHEAIETDIVAYSGRVQAVDAVAAELAAEHYHDIKRIAARQNNVARLWDFLREMVAARRERLLLNLELQKVFQDLLYLMDWMAEMKGRLQSQDLGKHLAGVEDLLQLHELVEADIAVQAERVRAVSASALRFCDPGKEYRPCDPQLVSERVATLEQSYEALCELAATRRARLEESRRLWRFLWEVGEAEAWVREQQHLLASAETGRDLTGVLRLLNKHTALRGEMSGRLGPLKLTLEQGQQLVAEGHPGANQASTRAAELQAQWERLEALAEERAQRLAQAASLYQFQADANDMEAWLVDALRLVSSPEVGHDEFSTQALARQHRALEEEIRAHRPTLDALREQAAALPPALSHTPEVQGRVPTLEQHYEELQARAGERARALEAALAFYTMLSEAGACGLWVEEKEQWLNGLALPERLEDLEVVQQRFETLEPEMNALAARVTAVSDIAEQLLKASPPGKDRIIGTQEQLNQRWQQFRSLADGKKAALTSALSIQNYHLECTETQAWMREKTKVIESTQDLGNDLAGVLALQRKLAGTERDLEAISARVGELTQEANALAAGHPAQAPAINTRLGEVQTGWEDLRATMRRREESLGEARRLQDFLRSLDDFQAWLGRTQTAVASEEGPATLPEAEALLAQHAALRGEVERAQSEYSRLRTLGEEVTRDQADPQCLFLRQRLEALGTGWEELGRMWESRQGRLAQAHGFQGFLRDARQAEGVLSSQEYFLSHTEMPGTLQAADAAIKKLEDFMSTMDANGERIRGLLEAGRQLVSKGNIHAEKIQEKADSIEKRHRKNQEAVQQLLGRLRDNREQQHFLQDCQELKLWIDEKMLTAQDVSYDEARNLHTKWQKHQAFMAELAANKDWLDKVDKEGRELTLEKPELKVLVSEKLEDLHRRWDELETTTQAKARSLFDANRAELFAQSCSALESWLESLQAQLHSDDYGKDLTSVNILLKKQQMLEREMAVREKEVEAIQAQAKALAQEDQSAGEVERTSRAVEEKFRALCQPMKDRCRRLQASREQHQFHRDVEDEILWVTERLPMASSLEHGKDLPSVQLLMKKNQTLQKEIQGHEPRIADLKERQRTLGTAAAGPELAELQEMWKRLSHELELRGKRLEEALRAQQFYRDAAEAEAWMGEQELHMMGQEKAKDELSAQAEVKKHQVLEQALADYAQTIKQLAASSQDMIDHEHPESTRLTIRQAQVDKLYAGLKELAGERRERLQEHLRLCQLRRELDDLEQWIQEREVVAASHELGQDYEHVTMLRDKFREFSRDTSTIGQERVDSANALANGLIAGGHAARATVAEWKDSLNEAWADLLELLDTRGQVLAAAYELQRFLHGARQALARVQHKQQQLPDGTGRDLNAAEALQRRHCAYEHDIQALSTQVQQVQDDGLRLQKAYAGDKAEEIGRHMQAVAEAWAQLQGSSAARRQLLLDTTDKFRFFKAVRELMLWMDGINLQMDAQERPRDVSSADLVIKNQQGIKAEIEARADRFSACIDMGQELLARNHYAAEEISEKLSQLQSRRQETAEKWQEKMDWLQLVLEVLVFGRDAGMAEAWLCSQEPLVRSAELGCTVDEVESLIKRHEAFQKSAVAWEERFSALEKLTALEERENEQKRKREEEERRKQPPTSEPMASQPEGSLVDGQRVLDTAWDGTQSKLPPSTQAPSINGVCTDTESSQPLLEQQRLEQSNVPEGPGSGTGDESSGPRGERQTLPRGPAPSPMPQSRSSESAHVATLPARGAELSAQEQMEGTLCRKQEMEAFNKKAANRSWQNVYCVLRRGSLGFYKDARAASAGVPYHGEVPVSLARAQGSVAFDYRKRKHVFKLGLQDGKEYLFQAKDEAEMSSWLRVVNAAIATASSASGEPEEPVVPSASRGLTRAMTMPPVSQPEGSIVLRSKDGREREREKRFSFFKKNK</sequence>